<evidence type="ECO:0000255" key="1">
    <source>
        <dbReference type="HAMAP-Rule" id="MF_01390"/>
    </source>
</evidence>
<geneLocation type="chloroplast"/>
<name>MATK_ASITR</name>
<reference key="1">
    <citation type="journal article" date="2003" name="Bot. J. Linn. Soc.">
        <title>Phylogenetic analysis of Magnoliales and Myristicaceae based on multiple data sets: implications for character evolution.</title>
        <authorList>
            <person name="Sauquet H."/>
            <person name="Doyle J.A."/>
            <person name="Scharaschkin T."/>
            <person name="Borsch T."/>
            <person name="Hilu K.W."/>
            <person name="Chatrou L.W."/>
            <person name="Le Thomas A."/>
        </authorList>
    </citation>
    <scope>NUCLEOTIDE SEQUENCE [GENOMIC DNA]</scope>
</reference>
<organism>
    <name type="scientific">Asimina triloba</name>
    <name type="common">Pawpaw</name>
    <name type="synonym">Annona triloba</name>
    <dbReference type="NCBI Taxonomy" id="12953"/>
    <lineage>
        <taxon>Eukaryota</taxon>
        <taxon>Viridiplantae</taxon>
        <taxon>Streptophyta</taxon>
        <taxon>Embryophyta</taxon>
        <taxon>Tracheophyta</taxon>
        <taxon>Spermatophyta</taxon>
        <taxon>Magnoliopsida</taxon>
        <taxon>Magnoliidae</taxon>
        <taxon>Magnoliales</taxon>
        <taxon>Annonaceae</taxon>
        <taxon>Annonoideae</taxon>
        <taxon>Annoneae</taxon>
        <taxon>Asimina</taxon>
    </lineage>
</organism>
<proteinExistence type="inferred from homology"/>
<dbReference type="EMBL" id="AY220437">
    <property type="protein sequence ID" value="AAP02920.1"/>
    <property type="molecule type" value="Genomic_DNA"/>
</dbReference>
<dbReference type="GO" id="GO:0009507">
    <property type="term" value="C:chloroplast"/>
    <property type="evidence" value="ECO:0007669"/>
    <property type="project" value="UniProtKB-SubCell"/>
</dbReference>
<dbReference type="GO" id="GO:0003723">
    <property type="term" value="F:RNA binding"/>
    <property type="evidence" value="ECO:0007669"/>
    <property type="project" value="UniProtKB-KW"/>
</dbReference>
<dbReference type="GO" id="GO:0006397">
    <property type="term" value="P:mRNA processing"/>
    <property type="evidence" value="ECO:0007669"/>
    <property type="project" value="UniProtKB-KW"/>
</dbReference>
<dbReference type="GO" id="GO:0008380">
    <property type="term" value="P:RNA splicing"/>
    <property type="evidence" value="ECO:0007669"/>
    <property type="project" value="UniProtKB-UniRule"/>
</dbReference>
<dbReference type="GO" id="GO:0008033">
    <property type="term" value="P:tRNA processing"/>
    <property type="evidence" value="ECO:0007669"/>
    <property type="project" value="UniProtKB-KW"/>
</dbReference>
<dbReference type="HAMAP" id="MF_01390">
    <property type="entry name" value="MatK"/>
    <property type="match status" value="1"/>
</dbReference>
<dbReference type="InterPro" id="IPR024937">
    <property type="entry name" value="Domain_X"/>
</dbReference>
<dbReference type="InterPro" id="IPR002866">
    <property type="entry name" value="Maturase_MatK"/>
</dbReference>
<dbReference type="InterPro" id="IPR024942">
    <property type="entry name" value="Maturase_MatK_N"/>
</dbReference>
<dbReference type="PANTHER" id="PTHR34811">
    <property type="entry name" value="MATURASE K"/>
    <property type="match status" value="1"/>
</dbReference>
<dbReference type="PANTHER" id="PTHR34811:SF1">
    <property type="entry name" value="MATURASE K"/>
    <property type="match status" value="1"/>
</dbReference>
<dbReference type="Pfam" id="PF01348">
    <property type="entry name" value="Intron_maturas2"/>
    <property type="match status" value="1"/>
</dbReference>
<dbReference type="Pfam" id="PF01824">
    <property type="entry name" value="MatK_N"/>
    <property type="match status" value="1"/>
</dbReference>
<feature type="chain" id="PRO_0000143260" description="Maturase K">
    <location>
        <begin position="1"/>
        <end position="507"/>
    </location>
</feature>
<sequence>MEELQRYFEIDRFRQQYFIYPFLFQEYIYALAHYYALNGSIFYETMENFGYDNKSSSLIVKRLITRMHRQNRLIISINDSNQNRFIGHSKNLYTQTLSEGFAVIMEIPFSLQLVFSLEEKEITKSHNLRSIHSIFPFFEDKLSHLNHVSHILIPYPAHLEILVQILHSWIQDAPSLHLLRFFLHDYQNSNSLKARKKSISVCSKENRRFFLFIYNFHVYECESVFVFLRKQSFHLRSTSFGTVLERTHFYGKIEHLVVVLRNDFQKTLWFFKDPFMHYVRYQGNSLLASKGTHFHMKKWKSYLVYFWQSHFCLWSQPDRIHINQLYNHSFYFLGFLSNVRQNSSAVRSQMLENSFLIDTSIKKFETLIPTIPLIGSLAKAKFCNVSGHPISKPARADSSDSDIISRFGRIYRNLSHYYSGSSKKQTLYRIKYILRLSCARTLARKHKSTVRAFLKELGSPFLEEFLMEEEQVLSLIFPRTPSPSYRSHRERIWYLDIICINILTNHV</sequence>
<keyword id="KW-0150">Chloroplast</keyword>
<keyword id="KW-0507">mRNA processing</keyword>
<keyword id="KW-0934">Plastid</keyword>
<keyword id="KW-0694">RNA-binding</keyword>
<keyword id="KW-0819">tRNA processing</keyword>
<accession>Q7YM31</accession>
<protein>
    <recommendedName>
        <fullName evidence="1">Maturase K</fullName>
    </recommendedName>
    <alternativeName>
        <fullName evidence="1">Intron maturase</fullName>
    </alternativeName>
</protein>
<gene>
    <name evidence="1" type="primary">matK</name>
</gene>
<comment type="function">
    <text evidence="1">Usually encoded in the trnK tRNA gene intron. Probably assists in splicing its own and other chloroplast group II introns.</text>
</comment>
<comment type="subcellular location">
    <subcellularLocation>
        <location>Plastid</location>
        <location>Chloroplast</location>
    </subcellularLocation>
</comment>
<comment type="similarity">
    <text evidence="1">Belongs to the intron maturase 2 family. MatK subfamily.</text>
</comment>